<keyword id="KW-0119">Carbohydrate metabolism</keyword>
<keyword id="KW-0320">Glycogen biosynthesis</keyword>
<keyword id="KW-0321">Glycogen metabolism</keyword>
<keyword id="KW-0328">Glycosyltransferase</keyword>
<keyword id="KW-1185">Reference proteome</keyword>
<keyword id="KW-0808">Transferase</keyword>
<protein>
    <recommendedName>
        <fullName evidence="1">1,4-alpha-glucan branching enzyme GlgB</fullName>
        <ecNumber evidence="1">2.4.1.18</ecNumber>
    </recommendedName>
    <alternativeName>
        <fullName evidence="1">1,4-alpha-D-glucan:1,4-alpha-D-glucan 6-glucosyl-transferase</fullName>
    </alternativeName>
    <alternativeName>
        <fullName evidence="1">Alpha-(1-&gt;4)-glucan branching enzyme</fullName>
    </alternativeName>
    <alternativeName>
        <fullName evidence="1">Glycogen branching enzyme</fullName>
        <shortName evidence="1">BE</shortName>
    </alternativeName>
</protein>
<comment type="function">
    <text evidence="1">Catalyzes the formation of the alpha-1,6-glucosidic linkages in glycogen by scission of a 1,4-alpha-linked oligosaccharide from growing alpha-1,4-glucan chains and the subsequent attachment of the oligosaccharide to the alpha-1,6 position.</text>
</comment>
<comment type="catalytic activity">
    <reaction evidence="1">
        <text>Transfers a segment of a (1-&gt;4)-alpha-D-glucan chain to a primary hydroxy group in a similar glucan chain.</text>
        <dbReference type="EC" id="2.4.1.18"/>
    </reaction>
</comment>
<comment type="pathway">
    <text evidence="1">Glycan biosynthesis; glycogen biosynthesis.</text>
</comment>
<comment type="subunit">
    <text evidence="1">Monomer.</text>
</comment>
<comment type="similarity">
    <text evidence="1">Belongs to the glycosyl hydrolase 13 family. GlgB subfamily.</text>
</comment>
<evidence type="ECO:0000255" key="1">
    <source>
        <dbReference type="HAMAP-Rule" id="MF_00685"/>
    </source>
</evidence>
<proteinExistence type="inferred from homology"/>
<accession>Q3J3M6</accession>
<reference key="1">
    <citation type="submission" date="2005-09" db="EMBL/GenBank/DDBJ databases">
        <title>Complete sequence of chromosome 1 of Rhodobacter sphaeroides 2.4.1.</title>
        <authorList>
            <person name="Copeland A."/>
            <person name="Lucas S."/>
            <person name="Lapidus A."/>
            <person name="Barry K."/>
            <person name="Detter J.C."/>
            <person name="Glavina T."/>
            <person name="Hammon N."/>
            <person name="Israni S."/>
            <person name="Pitluck S."/>
            <person name="Richardson P."/>
            <person name="Mackenzie C."/>
            <person name="Choudhary M."/>
            <person name="Larimer F."/>
            <person name="Hauser L.J."/>
            <person name="Land M."/>
            <person name="Donohue T.J."/>
            <person name="Kaplan S."/>
        </authorList>
    </citation>
    <scope>NUCLEOTIDE SEQUENCE [LARGE SCALE GENOMIC DNA]</scope>
    <source>
        <strain>ATCC 17023 / DSM 158 / JCM 6121 / CCUG 31486 / LMG 2827 / NBRC 12203 / NCIMB 8253 / ATH 2.4.1.</strain>
    </source>
</reference>
<name>GLGB_CERS4</name>
<gene>
    <name evidence="1" type="primary">glgB</name>
    <name type="ordered locus">RHOS4_10400</name>
    <name type="ORF">RSP_2448</name>
</gene>
<organism>
    <name type="scientific">Cereibacter sphaeroides (strain ATCC 17023 / DSM 158 / JCM 6121 / CCUG 31486 / LMG 2827 / NBRC 12203 / NCIMB 8253 / ATH 2.4.1.)</name>
    <name type="common">Rhodobacter sphaeroides</name>
    <dbReference type="NCBI Taxonomy" id="272943"/>
    <lineage>
        <taxon>Bacteria</taxon>
        <taxon>Pseudomonadati</taxon>
        <taxon>Pseudomonadota</taxon>
        <taxon>Alphaproteobacteria</taxon>
        <taxon>Rhodobacterales</taxon>
        <taxon>Paracoccaceae</taxon>
        <taxon>Cereibacter</taxon>
    </lineage>
</organism>
<dbReference type="EC" id="2.4.1.18" evidence="1"/>
<dbReference type="EMBL" id="CP000143">
    <property type="protein sequence ID" value="ABA78608.1"/>
    <property type="molecule type" value="Genomic_DNA"/>
</dbReference>
<dbReference type="RefSeq" id="WP_011337498.1">
    <property type="nucleotide sequence ID" value="NC_007493.2"/>
</dbReference>
<dbReference type="RefSeq" id="YP_352509.1">
    <property type="nucleotide sequence ID" value="NC_007493.2"/>
</dbReference>
<dbReference type="SMR" id="Q3J3M6"/>
<dbReference type="STRING" id="272943.RSP_2448"/>
<dbReference type="CAZy" id="CBM48">
    <property type="family name" value="Carbohydrate-Binding Module Family 48"/>
</dbReference>
<dbReference type="CAZy" id="GH13">
    <property type="family name" value="Glycoside Hydrolase Family 13"/>
</dbReference>
<dbReference type="DNASU" id="3720044"/>
<dbReference type="EnsemblBacteria" id="ABA78608">
    <property type="protein sequence ID" value="ABA78608"/>
    <property type="gene ID" value="RSP_2448"/>
</dbReference>
<dbReference type="GeneID" id="3720044"/>
<dbReference type="KEGG" id="rsp:RSP_2448"/>
<dbReference type="PATRIC" id="fig|272943.9.peg.1366"/>
<dbReference type="eggNOG" id="COG0296">
    <property type="taxonomic scope" value="Bacteria"/>
</dbReference>
<dbReference type="OrthoDB" id="9800174at2"/>
<dbReference type="PhylomeDB" id="Q3J3M6"/>
<dbReference type="UniPathway" id="UPA00164"/>
<dbReference type="Proteomes" id="UP000002703">
    <property type="component" value="Chromosome 1"/>
</dbReference>
<dbReference type="GO" id="GO:0005829">
    <property type="term" value="C:cytosol"/>
    <property type="evidence" value="ECO:0007669"/>
    <property type="project" value="TreeGrafter"/>
</dbReference>
<dbReference type="GO" id="GO:0003844">
    <property type="term" value="F:1,4-alpha-glucan branching enzyme activity"/>
    <property type="evidence" value="ECO:0007669"/>
    <property type="project" value="UniProtKB-UniRule"/>
</dbReference>
<dbReference type="GO" id="GO:0043169">
    <property type="term" value="F:cation binding"/>
    <property type="evidence" value="ECO:0007669"/>
    <property type="project" value="InterPro"/>
</dbReference>
<dbReference type="GO" id="GO:0004553">
    <property type="term" value="F:hydrolase activity, hydrolyzing O-glycosyl compounds"/>
    <property type="evidence" value="ECO:0007669"/>
    <property type="project" value="InterPro"/>
</dbReference>
<dbReference type="GO" id="GO:0005978">
    <property type="term" value="P:glycogen biosynthetic process"/>
    <property type="evidence" value="ECO:0007669"/>
    <property type="project" value="UniProtKB-UniRule"/>
</dbReference>
<dbReference type="CDD" id="cd11322">
    <property type="entry name" value="AmyAc_Glg_BE"/>
    <property type="match status" value="1"/>
</dbReference>
<dbReference type="CDD" id="cd02855">
    <property type="entry name" value="E_set_GBE_prok_N"/>
    <property type="match status" value="1"/>
</dbReference>
<dbReference type="FunFam" id="2.60.40.10:FF:000169">
    <property type="entry name" value="1,4-alpha-glucan branching enzyme GlgB"/>
    <property type="match status" value="1"/>
</dbReference>
<dbReference type="FunFam" id="2.60.40.1180:FF:000002">
    <property type="entry name" value="1,4-alpha-glucan branching enzyme GlgB"/>
    <property type="match status" value="1"/>
</dbReference>
<dbReference type="FunFam" id="3.20.20.80:FF:000003">
    <property type="entry name" value="1,4-alpha-glucan branching enzyme GlgB"/>
    <property type="match status" value="1"/>
</dbReference>
<dbReference type="Gene3D" id="3.20.20.80">
    <property type="entry name" value="Glycosidases"/>
    <property type="match status" value="1"/>
</dbReference>
<dbReference type="Gene3D" id="2.60.40.1180">
    <property type="entry name" value="Golgi alpha-mannosidase II"/>
    <property type="match status" value="1"/>
</dbReference>
<dbReference type="Gene3D" id="2.60.40.10">
    <property type="entry name" value="Immunoglobulins"/>
    <property type="match status" value="2"/>
</dbReference>
<dbReference type="HAMAP" id="MF_00685">
    <property type="entry name" value="GlgB"/>
    <property type="match status" value="1"/>
</dbReference>
<dbReference type="InterPro" id="IPR006048">
    <property type="entry name" value="A-amylase/branching_C"/>
</dbReference>
<dbReference type="InterPro" id="IPR037439">
    <property type="entry name" value="Branching_enzy"/>
</dbReference>
<dbReference type="InterPro" id="IPR006407">
    <property type="entry name" value="GlgB"/>
</dbReference>
<dbReference type="InterPro" id="IPR054169">
    <property type="entry name" value="GlgB_N"/>
</dbReference>
<dbReference type="InterPro" id="IPR044143">
    <property type="entry name" value="GlgB_N_E_set_prok"/>
</dbReference>
<dbReference type="InterPro" id="IPR006047">
    <property type="entry name" value="Glyco_hydro_13_cat_dom"/>
</dbReference>
<dbReference type="InterPro" id="IPR004193">
    <property type="entry name" value="Glyco_hydro_13_N"/>
</dbReference>
<dbReference type="InterPro" id="IPR013780">
    <property type="entry name" value="Glyco_hydro_b"/>
</dbReference>
<dbReference type="InterPro" id="IPR017853">
    <property type="entry name" value="Glycoside_hydrolase_SF"/>
</dbReference>
<dbReference type="InterPro" id="IPR013783">
    <property type="entry name" value="Ig-like_fold"/>
</dbReference>
<dbReference type="InterPro" id="IPR014756">
    <property type="entry name" value="Ig_E-set"/>
</dbReference>
<dbReference type="NCBIfam" id="TIGR01515">
    <property type="entry name" value="branching_enzym"/>
    <property type="match status" value="1"/>
</dbReference>
<dbReference type="NCBIfam" id="NF003811">
    <property type="entry name" value="PRK05402.1"/>
    <property type="match status" value="1"/>
</dbReference>
<dbReference type="NCBIfam" id="NF008967">
    <property type="entry name" value="PRK12313.1"/>
    <property type="match status" value="1"/>
</dbReference>
<dbReference type="PANTHER" id="PTHR43651">
    <property type="entry name" value="1,4-ALPHA-GLUCAN-BRANCHING ENZYME"/>
    <property type="match status" value="1"/>
</dbReference>
<dbReference type="PANTHER" id="PTHR43651:SF3">
    <property type="entry name" value="1,4-ALPHA-GLUCAN-BRANCHING ENZYME"/>
    <property type="match status" value="1"/>
</dbReference>
<dbReference type="Pfam" id="PF00128">
    <property type="entry name" value="Alpha-amylase"/>
    <property type="match status" value="1"/>
</dbReference>
<dbReference type="Pfam" id="PF02806">
    <property type="entry name" value="Alpha-amylase_C"/>
    <property type="match status" value="1"/>
</dbReference>
<dbReference type="Pfam" id="PF02922">
    <property type="entry name" value="CBM_48"/>
    <property type="match status" value="1"/>
</dbReference>
<dbReference type="Pfam" id="PF22019">
    <property type="entry name" value="GlgB_N"/>
    <property type="match status" value="1"/>
</dbReference>
<dbReference type="PIRSF" id="PIRSF000463">
    <property type="entry name" value="GlgB"/>
    <property type="match status" value="1"/>
</dbReference>
<dbReference type="SMART" id="SM00642">
    <property type="entry name" value="Aamy"/>
    <property type="match status" value="1"/>
</dbReference>
<dbReference type="SUPFAM" id="SSF51445">
    <property type="entry name" value="(Trans)glycosidases"/>
    <property type="match status" value="1"/>
</dbReference>
<dbReference type="SUPFAM" id="SSF81296">
    <property type="entry name" value="E set domains"/>
    <property type="match status" value="2"/>
</dbReference>
<dbReference type="SUPFAM" id="SSF51011">
    <property type="entry name" value="Glycosyl hydrolase domain"/>
    <property type="match status" value="1"/>
</dbReference>
<feature type="chain" id="PRO_0000260686" description="1,4-alpha-glucan branching enzyme GlgB">
    <location>
        <begin position="1"/>
        <end position="728"/>
    </location>
</feature>
<feature type="active site" description="Nucleophile" evidence="1">
    <location>
        <position position="409"/>
    </location>
</feature>
<feature type="active site" description="Proton donor" evidence="1">
    <location>
        <position position="462"/>
    </location>
</feature>
<sequence length="728" mass="81458">MNVTSKPGELVPESDVAAIMRGTHGDPFRVLGMHGGGGAPLSVRVFAPQAAEVAVLGQGGEVLAPLERIGAEGFFAGTVPGEEKFPYRLRFVSGPHEWEADDPYRFPEVLGELDEYLLGEGRHYQLYTRLGAHPAEIEGVQGVSFAVWAPNARRVSVVGAFNAWDGRRHPMRKRIGVGVWELFVPGLHTGDLYKYELLGPSGERLPLKSDPLSFAQEAPPATASVVHGLPEAEWHDAGWMQERESRQRRDAPISIYEVHAGSWRQGLDYDALAEELSAYVREMGFTHVEFLPISEHPFTGSWGYQPIGLFAPTARFGPPEGFARLVDRLHRDGIGVILDWVPAHFPSDAHGLANFDGTHLYDHADPRQGFHRDWNTQIYNFGRQEVANFLQASALFWLDRYHVDALRVDAVASMLYLDYSRNAGEWVPNRHGGRENLEAIDFLRGVNERVRLDHPGCITIAEESTAFPQVSRPVEDGGLGFGFKWNMGWMHDTLGYFRRDPIHRKHHQNDLTFGMVYAYSEDFVLPLSHDEVVHGKGSLIGQMAGDRWQKFANLRAYFGFMWAHPGKKLLFMGGEFAQEREWNHDASLDWHLLDDPSHAGMKRLVADLNREYRKRPALHRMDCDPEGFEWIDAGDSENSVLSFLRKAPGEKPVLAVCNLTPVVRSDYRIGVPEGGEWREILNSDAAIYGGSDVGNPGGLQAEEFSWHGRPASLRLTLPPLATIFVTPA</sequence>